<organism>
    <name type="scientific">Cupiennius salei</name>
    <name type="common">American wandering spider</name>
    <dbReference type="NCBI Taxonomy" id="6928"/>
    <lineage>
        <taxon>Eukaryota</taxon>
        <taxon>Metazoa</taxon>
        <taxon>Ecdysozoa</taxon>
        <taxon>Arthropoda</taxon>
        <taxon>Chelicerata</taxon>
        <taxon>Arachnida</taxon>
        <taxon>Araneae</taxon>
        <taxon>Araneomorphae</taxon>
        <taxon>Entelegynae</taxon>
        <taxon>Lycosoidea</taxon>
        <taxon>Ctenidae</taxon>
        <taxon>Cupiennius</taxon>
    </lineage>
</organism>
<reference key="1">
    <citation type="journal article" date="2012" name="FEBS J.">
        <title>Multicomponent venom of the spider Cupiennius salei: a bioanalytical investigation applying different strategies.</title>
        <authorList>
            <person name="Trachsel C."/>
            <person name="Siegemund D."/>
            <person name="Kampfer U."/>
            <person name="Kopp L.S."/>
            <person name="Buhr C."/>
            <person name="Grossmann J."/>
            <person name="Luthi C."/>
            <person name="Cunningham M."/>
            <person name="Nentwig W."/>
            <person name="Kuhn-Nentwig L."/>
            <person name="Schurch S."/>
            <person name="Schaller J."/>
        </authorList>
    </citation>
    <scope>PROTEIN SEQUENCE</scope>
    <scope>MASS SPECTROMETRY</scope>
    <scope>AMIDATION AT GLU-28</scope>
    <source>
        <tissue>Venom</tissue>
    </source>
</reference>
<dbReference type="GO" id="GO:0005576">
    <property type="term" value="C:extracellular region"/>
    <property type="evidence" value="ECO:0007669"/>
    <property type="project" value="UniProtKB-SubCell"/>
</dbReference>
<dbReference type="GO" id="GO:0090729">
    <property type="term" value="F:toxin activity"/>
    <property type="evidence" value="ECO:0007669"/>
    <property type="project" value="UniProtKB-KW"/>
</dbReference>
<dbReference type="GO" id="GO:0042742">
    <property type="term" value="P:defense response to bacterium"/>
    <property type="evidence" value="ECO:0007669"/>
    <property type="project" value="InterPro"/>
</dbReference>
<dbReference type="InterPro" id="IPR035164">
    <property type="entry name" value="Cupiennin"/>
</dbReference>
<dbReference type="Pfam" id="PF17563">
    <property type="entry name" value="Cu"/>
    <property type="match status" value="1"/>
</dbReference>
<sequence>FLAKKVAKTVAKQAAKQGAKYVANKHME</sequence>
<feature type="peptide" id="PRO_0000421201" description="Short cationic peptide-1b" evidence="1">
    <location>
        <begin position="1"/>
        <end position="28"/>
    </location>
</feature>
<feature type="modified residue" description="Glutamic acid 1-amide" evidence="1">
    <location>
        <position position="28"/>
    </location>
</feature>
<comment type="subcellular location">
    <subcellularLocation>
        <location evidence="1">Secreted</location>
    </subcellularLocation>
</comment>
<comment type="tissue specificity">
    <text evidence="4">Expressed by the venom gland.</text>
</comment>
<comment type="mass spectrometry"/>
<comment type="similarity">
    <text evidence="3">Belongs to the cationic peptide 04 (cupiennin) family. 01 subfamily.</text>
</comment>
<keyword id="KW-0027">Amidation</keyword>
<keyword id="KW-0903">Direct protein sequencing</keyword>
<keyword id="KW-0964">Secreted</keyword>
<keyword id="KW-0800">Toxin</keyword>
<name>TXS1B_CUPSA</name>
<evidence type="ECO:0000269" key="1">
    <source>
    </source>
</evidence>
<evidence type="ECO:0000303" key="2">
    <source>
    </source>
</evidence>
<evidence type="ECO:0000305" key="3"/>
<evidence type="ECO:0000305" key="4">
    <source>
    </source>
</evidence>
<proteinExistence type="evidence at protein level"/>
<accession>B3EWU2</accession>
<protein>
    <recommendedName>
        <fullName evidence="2">Short cationic peptide-1b</fullName>
        <shortName evidence="2">SCP-1b</shortName>
    </recommendedName>
    <alternativeName>
        <fullName evidence="2">Cupiennin 1-like peptide-1b</fullName>
    </alternativeName>
    <alternativeName>
        <fullName evidence="3">Truncated variant of Cupiennin 1 family</fullName>
    </alternativeName>
</protein>